<protein>
    <recommendedName>
        <fullName evidence="1">Ketol-acid reductoisomerase (NADP(+))</fullName>
        <shortName evidence="1">KARI</shortName>
        <ecNumber evidence="1">1.1.1.86</ecNumber>
    </recommendedName>
    <alternativeName>
        <fullName evidence="1">Acetohydroxy-acid isomeroreductase</fullName>
        <shortName evidence="1">AHIR</shortName>
    </alternativeName>
    <alternativeName>
        <fullName evidence="1">Alpha-keto-beta-hydroxylacyl reductoisomerase</fullName>
    </alternativeName>
    <alternativeName>
        <fullName evidence="1">Ketol-acid reductoisomerase type 2</fullName>
    </alternativeName>
    <alternativeName>
        <fullName evidence="1">Ketol-acid reductoisomerase type II</fullName>
    </alternativeName>
</protein>
<accession>A7FD32</accession>
<comment type="function">
    <text evidence="1">Involved in the biosynthesis of branched-chain amino acids (BCAA). Catalyzes an alkyl-migration followed by a ketol-acid reduction of (S)-2-acetolactate (S2AL) to yield (R)-2,3-dihydroxy-isovalerate. In the isomerase reaction, S2AL is rearranged via a Mg-dependent methyl migration to produce 3-hydroxy-3-methyl-2-ketobutyrate (HMKB). In the reductase reaction, this 2-ketoacid undergoes a metal-dependent reduction by NADPH to yield (R)-2,3-dihydroxy-isovalerate.</text>
</comment>
<comment type="catalytic activity">
    <reaction evidence="1">
        <text>(2R)-2,3-dihydroxy-3-methylbutanoate + NADP(+) = (2S)-2-acetolactate + NADPH + H(+)</text>
        <dbReference type="Rhea" id="RHEA:22068"/>
        <dbReference type="ChEBI" id="CHEBI:15378"/>
        <dbReference type="ChEBI" id="CHEBI:49072"/>
        <dbReference type="ChEBI" id="CHEBI:57783"/>
        <dbReference type="ChEBI" id="CHEBI:58349"/>
        <dbReference type="ChEBI" id="CHEBI:58476"/>
        <dbReference type="EC" id="1.1.1.86"/>
    </reaction>
</comment>
<comment type="catalytic activity">
    <reaction evidence="1">
        <text>(2R,3R)-2,3-dihydroxy-3-methylpentanoate + NADP(+) = (S)-2-ethyl-2-hydroxy-3-oxobutanoate + NADPH + H(+)</text>
        <dbReference type="Rhea" id="RHEA:13493"/>
        <dbReference type="ChEBI" id="CHEBI:15378"/>
        <dbReference type="ChEBI" id="CHEBI:49256"/>
        <dbReference type="ChEBI" id="CHEBI:49258"/>
        <dbReference type="ChEBI" id="CHEBI:57783"/>
        <dbReference type="ChEBI" id="CHEBI:58349"/>
        <dbReference type="EC" id="1.1.1.86"/>
    </reaction>
</comment>
<comment type="cofactor">
    <cofactor evidence="1">
        <name>Mg(2+)</name>
        <dbReference type="ChEBI" id="CHEBI:18420"/>
    </cofactor>
    <text evidence="1">Binds 2 magnesium ions per subunit.</text>
</comment>
<comment type="pathway">
    <text evidence="1">Amino-acid biosynthesis; L-isoleucine biosynthesis; L-isoleucine from 2-oxobutanoate: step 2/4.</text>
</comment>
<comment type="pathway">
    <text evidence="1">Amino-acid biosynthesis; L-valine biosynthesis; L-valine from pyruvate: step 2/4.</text>
</comment>
<comment type="similarity">
    <text evidence="1">Belongs to the ketol-acid reductoisomerase family.</text>
</comment>
<reference key="1">
    <citation type="journal article" date="2007" name="PLoS Genet.">
        <title>The complete genome sequence of Yersinia pseudotuberculosis IP31758, the causative agent of Far East scarlet-like fever.</title>
        <authorList>
            <person name="Eppinger M."/>
            <person name="Rosovitz M.J."/>
            <person name="Fricke W.F."/>
            <person name="Rasko D.A."/>
            <person name="Kokorina G."/>
            <person name="Fayolle C."/>
            <person name="Lindler L.E."/>
            <person name="Carniel E."/>
            <person name="Ravel J."/>
        </authorList>
    </citation>
    <scope>NUCLEOTIDE SEQUENCE [LARGE SCALE GENOMIC DNA]</scope>
    <source>
        <strain>IP 31758</strain>
    </source>
</reference>
<organism>
    <name type="scientific">Yersinia pseudotuberculosis serotype O:1b (strain IP 31758)</name>
    <dbReference type="NCBI Taxonomy" id="349747"/>
    <lineage>
        <taxon>Bacteria</taxon>
        <taxon>Pseudomonadati</taxon>
        <taxon>Pseudomonadota</taxon>
        <taxon>Gammaproteobacteria</taxon>
        <taxon>Enterobacterales</taxon>
        <taxon>Yersiniaceae</taxon>
        <taxon>Yersinia</taxon>
    </lineage>
</organism>
<sequence length="492" mass="53933">MANYFNTLNLRQQLAQLGKCRFMARDEFADEAGYLKGKKVVIVGCGAQGLNQGLNMRDSGLDVAYALRKEAIAEKRASWRKATENGFKVGTYEELIPQADLVVNLTPDKQHSAVVKAVQPLMKEGAALGYSHGFNIVEVGEQVRKDITVVMVAPKCPGTEVREEYKRGFGVPTLIAVHPENDPKGEGMAIAKAWAAATGGHRAGVLESSFVAEVKSDLMGEQTILCGMLQAGSLLCFDKLVSEGTDAAYAEKLIQFGWETITEALKQGGITLMMDRLSNPAKLRAYALSEQLKEIMAPLFQKHMDDIISGAFSSGMMADWANDDVKLLNWREETGRTAFENAPQFEGKISEQEYFDHGVLMIAMVKAGVELAFETMVDSGIIEESAYYESLHELPLIANTIARKRLYEMNVVISDTAEYGNYLFANAAVPLLKEKFMDSLQAGDLGKSIPGSAVDNAQLRDVNEAIRNHPIEAVGHKLRGYMTDMKRIAVAG</sequence>
<proteinExistence type="inferred from homology"/>
<name>ILVC_YERP3</name>
<gene>
    <name evidence="1" type="primary">ilvC</name>
    <name type="ordered locus">YpsIP31758_0163</name>
</gene>
<feature type="chain" id="PRO_1000060234" description="Ketol-acid reductoisomerase (NADP(+))">
    <location>
        <begin position="1"/>
        <end position="492"/>
    </location>
</feature>
<feature type="domain" description="KARI N-terminal Rossmann" evidence="2">
    <location>
        <begin position="15"/>
        <end position="208"/>
    </location>
</feature>
<feature type="domain" description="KARI C-terminal knotted 1" evidence="3">
    <location>
        <begin position="209"/>
        <end position="344"/>
    </location>
</feature>
<feature type="domain" description="KARI C-terminal knotted 2" evidence="3">
    <location>
        <begin position="345"/>
        <end position="485"/>
    </location>
</feature>
<feature type="active site" evidence="1">
    <location>
        <position position="132"/>
    </location>
</feature>
<feature type="binding site" evidence="1">
    <location>
        <begin position="45"/>
        <end position="48"/>
    </location>
    <ligand>
        <name>NADP(+)</name>
        <dbReference type="ChEBI" id="CHEBI:58349"/>
    </ligand>
</feature>
<feature type="binding site" evidence="1">
    <location>
        <position position="68"/>
    </location>
    <ligand>
        <name>NADP(+)</name>
        <dbReference type="ChEBI" id="CHEBI:58349"/>
    </ligand>
</feature>
<feature type="binding site" evidence="1">
    <location>
        <position position="76"/>
    </location>
    <ligand>
        <name>NADP(+)</name>
        <dbReference type="ChEBI" id="CHEBI:58349"/>
    </ligand>
</feature>
<feature type="binding site" evidence="1">
    <location>
        <position position="78"/>
    </location>
    <ligand>
        <name>NADP(+)</name>
        <dbReference type="ChEBI" id="CHEBI:58349"/>
    </ligand>
</feature>
<feature type="binding site" evidence="1">
    <location>
        <begin position="108"/>
        <end position="110"/>
    </location>
    <ligand>
        <name>NADP(+)</name>
        <dbReference type="ChEBI" id="CHEBI:58349"/>
    </ligand>
</feature>
<feature type="binding site" evidence="1">
    <location>
        <position position="158"/>
    </location>
    <ligand>
        <name>NADP(+)</name>
        <dbReference type="ChEBI" id="CHEBI:58349"/>
    </ligand>
</feature>
<feature type="binding site" evidence="1">
    <location>
        <position position="217"/>
    </location>
    <ligand>
        <name>Mg(2+)</name>
        <dbReference type="ChEBI" id="CHEBI:18420"/>
        <label>1</label>
    </ligand>
</feature>
<feature type="binding site" evidence="1">
    <location>
        <position position="217"/>
    </location>
    <ligand>
        <name>Mg(2+)</name>
        <dbReference type="ChEBI" id="CHEBI:18420"/>
        <label>2</label>
    </ligand>
</feature>
<feature type="binding site" evidence="1">
    <location>
        <position position="221"/>
    </location>
    <ligand>
        <name>Mg(2+)</name>
        <dbReference type="ChEBI" id="CHEBI:18420"/>
        <label>1</label>
    </ligand>
</feature>
<feature type="binding site" evidence="1">
    <location>
        <position position="389"/>
    </location>
    <ligand>
        <name>Mg(2+)</name>
        <dbReference type="ChEBI" id="CHEBI:18420"/>
        <label>2</label>
    </ligand>
</feature>
<feature type="binding site" evidence="1">
    <location>
        <position position="393"/>
    </location>
    <ligand>
        <name>Mg(2+)</name>
        <dbReference type="ChEBI" id="CHEBI:18420"/>
        <label>2</label>
    </ligand>
</feature>
<feature type="binding site" evidence="1">
    <location>
        <position position="414"/>
    </location>
    <ligand>
        <name>substrate</name>
    </ligand>
</feature>
<evidence type="ECO:0000255" key="1">
    <source>
        <dbReference type="HAMAP-Rule" id="MF_00435"/>
    </source>
</evidence>
<evidence type="ECO:0000255" key="2">
    <source>
        <dbReference type="PROSITE-ProRule" id="PRU01197"/>
    </source>
</evidence>
<evidence type="ECO:0000255" key="3">
    <source>
        <dbReference type="PROSITE-ProRule" id="PRU01198"/>
    </source>
</evidence>
<dbReference type="EC" id="1.1.1.86" evidence="1"/>
<dbReference type="EMBL" id="CP000720">
    <property type="protein sequence ID" value="ABS49479.1"/>
    <property type="molecule type" value="Genomic_DNA"/>
</dbReference>
<dbReference type="RefSeq" id="WP_011191486.1">
    <property type="nucleotide sequence ID" value="NC_009708.1"/>
</dbReference>
<dbReference type="SMR" id="A7FD32"/>
<dbReference type="GeneID" id="96663628"/>
<dbReference type="KEGG" id="ypi:YpsIP31758_0163"/>
<dbReference type="HOGENOM" id="CLU_551905_0_0_6"/>
<dbReference type="UniPathway" id="UPA00047">
    <property type="reaction ID" value="UER00056"/>
</dbReference>
<dbReference type="UniPathway" id="UPA00049">
    <property type="reaction ID" value="UER00060"/>
</dbReference>
<dbReference type="Proteomes" id="UP000002412">
    <property type="component" value="Chromosome"/>
</dbReference>
<dbReference type="GO" id="GO:0005829">
    <property type="term" value="C:cytosol"/>
    <property type="evidence" value="ECO:0007669"/>
    <property type="project" value="TreeGrafter"/>
</dbReference>
<dbReference type="GO" id="GO:0004455">
    <property type="term" value="F:ketol-acid reductoisomerase activity"/>
    <property type="evidence" value="ECO:0007669"/>
    <property type="project" value="UniProtKB-UniRule"/>
</dbReference>
<dbReference type="GO" id="GO:0000287">
    <property type="term" value="F:magnesium ion binding"/>
    <property type="evidence" value="ECO:0007669"/>
    <property type="project" value="UniProtKB-UniRule"/>
</dbReference>
<dbReference type="GO" id="GO:0009097">
    <property type="term" value="P:isoleucine biosynthetic process"/>
    <property type="evidence" value="ECO:0007669"/>
    <property type="project" value="UniProtKB-UniRule"/>
</dbReference>
<dbReference type="GO" id="GO:0009099">
    <property type="term" value="P:L-valine biosynthetic process"/>
    <property type="evidence" value="ECO:0007669"/>
    <property type="project" value="UniProtKB-UniRule"/>
</dbReference>
<dbReference type="FunFam" id="1.10.1040.10:FF:000007">
    <property type="entry name" value="Ketol-acid reductoisomerase (NADP(+))"/>
    <property type="match status" value="1"/>
</dbReference>
<dbReference type="FunFam" id="3.40.50.720:FF:000043">
    <property type="entry name" value="Ketol-acid reductoisomerase (NADP(+))"/>
    <property type="match status" value="1"/>
</dbReference>
<dbReference type="Gene3D" id="1.10.1040.10">
    <property type="entry name" value="N-(1-d-carboxylethyl)-l-norvaline Dehydrogenase, domain 2"/>
    <property type="match status" value="1"/>
</dbReference>
<dbReference type="Gene3D" id="3.40.50.720">
    <property type="entry name" value="NAD(P)-binding Rossmann-like Domain"/>
    <property type="match status" value="1"/>
</dbReference>
<dbReference type="HAMAP" id="MF_00435">
    <property type="entry name" value="IlvC"/>
    <property type="match status" value="1"/>
</dbReference>
<dbReference type="InterPro" id="IPR008927">
    <property type="entry name" value="6-PGluconate_DH-like_C_sf"/>
</dbReference>
<dbReference type="InterPro" id="IPR013328">
    <property type="entry name" value="6PGD_dom2"/>
</dbReference>
<dbReference type="InterPro" id="IPR013023">
    <property type="entry name" value="KARI"/>
</dbReference>
<dbReference type="InterPro" id="IPR000506">
    <property type="entry name" value="KARI_C"/>
</dbReference>
<dbReference type="InterPro" id="IPR013116">
    <property type="entry name" value="KARI_N"/>
</dbReference>
<dbReference type="InterPro" id="IPR036291">
    <property type="entry name" value="NAD(P)-bd_dom_sf"/>
</dbReference>
<dbReference type="NCBIfam" id="TIGR00465">
    <property type="entry name" value="ilvC"/>
    <property type="match status" value="1"/>
</dbReference>
<dbReference type="NCBIfam" id="NF003557">
    <property type="entry name" value="PRK05225.1"/>
    <property type="match status" value="1"/>
</dbReference>
<dbReference type="PANTHER" id="PTHR21371">
    <property type="entry name" value="KETOL-ACID REDUCTOISOMERASE, MITOCHONDRIAL"/>
    <property type="match status" value="1"/>
</dbReference>
<dbReference type="PANTHER" id="PTHR21371:SF1">
    <property type="entry name" value="KETOL-ACID REDUCTOISOMERASE, MITOCHONDRIAL"/>
    <property type="match status" value="1"/>
</dbReference>
<dbReference type="Pfam" id="PF01450">
    <property type="entry name" value="KARI_C"/>
    <property type="match status" value="2"/>
</dbReference>
<dbReference type="Pfam" id="PF07991">
    <property type="entry name" value="KARI_N"/>
    <property type="match status" value="1"/>
</dbReference>
<dbReference type="SUPFAM" id="SSF48179">
    <property type="entry name" value="6-phosphogluconate dehydrogenase C-terminal domain-like"/>
    <property type="match status" value="2"/>
</dbReference>
<dbReference type="SUPFAM" id="SSF51735">
    <property type="entry name" value="NAD(P)-binding Rossmann-fold domains"/>
    <property type="match status" value="1"/>
</dbReference>
<dbReference type="PROSITE" id="PS51851">
    <property type="entry name" value="KARI_C"/>
    <property type="match status" value="2"/>
</dbReference>
<dbReference type="PROSITE" id="PS51850">
    <property type="entry name" value="KARI_N"/>
    <property type="match status" value="1"/>
</dbReference>
<keyword id="KW-0028">Amino-acid biosynthesis</keyword>
<keyword id="KW-0100">Branched-chain amino acid biosynthesis</keyword>
<keyword id="KW-0460">Magnesium</keyword>
<keyword id="KW-0479">Metal-binding</keyword>
<keyword id="KW-0521">NADP</keyword>
<keyword id="KW-0560">Oxidoreductase</keyword>
<keyword id="KW-0677">Repeat</keyword>